<feature type="chain" id="PRO_1000000139" description="Ribosome-binding factor A">
    <location>
        <begin position="1"/>
        <end position="125"/>
    </location>
</feature>
<organism>
    <name type="scientific">Methylobacillus flagellatus (strain ATCC 51484 / DSM 6875 / VKM B-1610 / KT)</name>
    <dbReference type="NCBI Taxonomy" id="265072"/>
    <lineage>
        <taxon>Bacteria</taxon>
        <taxon>Pseudomonadati</taxon>
        <taxon>Pseudomonadota</taxon>
        <taxon>Betaproteobacteria</taxon>
        <taxon>Nitrosomonadales</taxon>
        <taxon>Methylophilaceae</taxon>
        <taxon>Methylobacillus</taxon>
    </lineage>
</organism>
<proteinExistence type="inferred from homology"/>
<gene>
    <name evidence="1" type="primary">rbfA</name>
    <name type="ordered locus">Mfla_0068</name>
</gene>
<evidence type="ECO:0000255" key="1">
    <source>
        <dbReference type="HAMAP-Rule" id="MF_00003"/>
    </source>
</evidence>
<protein>
    <recommendedName>
        <fullName evidence="1">Ribosome-binding factor A</fullName>
    </recommendedName>
</protein>
<accession>Q1GXD5</accession>
<reference key="1">
    <citation type="submission" date="2006-03" db="EMBL/GenBank/DDBJ databases">
        <title>Complete sequence of Methylobacillus flagellatus KT.</title>
        <authorList>
            <consortium name="US DOE Joint Genome Institute"/>
            <person name="Copeland A."/>
            <person name="Lucas S."/>
            <person name="Lapidus A."/>
            <person name="Barry K."/>
            <person name="Detter J.C."/>
            <person name="Glavina del Rio T."/>
            <person name="Hammon N."/>
            <person name="Israni S."/>
            <person name="Dalin E."/>
            <person name="Tice H."/>
            <person name="Pitluck S."/>
            <person name="Brettin T."/>
            <person name="Bruce D."/>
            <person name="Han C."/>
            <person name="Tapia R."/>
            <person name="Saunders E."/>
            <person name="Gilna P."/>
            <person name="Schmutz J."/>
            <person name="Larimer F."/>
            <person name="Land M."/>
            <person name="Kyrpides N."/>
            <person name="Anderson I."/>
            <person name="Richardson P."/>
        </authorList>
    </citation>
    <scope>NUCLEOTIDE SEQUENCE [LARGE SCALE GENOMIC DNA]</scope>
    <source>
        <strain>ATCC 51484 / DSM 6875 / VKM B-1610 / KT</strain>
    </source>
</reference>
<name>RBFA_METFK</name>
<keyword id="KW-0963">Cytoplasm</keyword>
<keyword id="KW-1185">Reference proteome</keyword>
<keyword id="KW-0690">Ribosome biogenesis</keyword>
<dbReference type="EMBL" id="CP000284">
    <property type="protein sequence ID" value="ABE48339.1"/>
    <property type="molecule type" value="Genomic_DNA"/>
</dbReference>
<dbReference type="RefSeq" id="WP_011478436.1">
    <property type="nucleotide sequence ID" value="NC_007947.1"/>
</dbReference>
<dbReference type="SMR" id="Q1GXD5"/>
<dbReference type="STRING" id="265072.Mfla_0068"/>
<dbReference type="KEGG" id="mfa:Mfla_0068"/>
<dbReference type="eggNOG" id="COG0858">
    <property type="taxonomic scope" value="Bacteria"/>
</dbReference>
<dbReference type="HOGENOM" id="CLU_089475_5_0_4"/>
<dbReference type="OrthoDB" id="307788at2"/>
<dbReference type="Proteomes" id="UP000002440">
    <property type="component" value="Chromosome"/>
</dbReference>
<dbReference type="GO" id="GO:0005829">
    <property type="term" value="C:cytosol"/>
    <property type="evidence" value="ECO:0007669"/>
    <property type="project" value="TreeGrafter"/>
</dbReference>
<dbReference type="GO" id="GO:0043024">
    <property type="term" value="F:ribosomal small subunit binding"/>
    <property type="evidence" value="ECO:0007669"/>
    <property type="project" value="TreeGrafter"/>
</dbReference>
<dbReference type="GO" id="GO:0030490">
    <property type="term" value="P:maturation of SSU-rRNA"/>
    <property type="evidence" value="ECO:0007669"/>
    <property type="project" value="UniProtKB-UniRule"/>
</dbReference>
<dbReference type="Gene3D" id="3.30.300.20">
    <property type="match status" value="1"/>
</dbReference>
<dbReference type="HAMAP" id="MF_00003">
    <property type="entry name" value="RbfA"/>
    <property type="match status" value="1"/>
</dbReference>
<dbReference type="InterPro" id="IPR015946">
    <property type="entry name" value="KH_dom-like_a/b"/>
</dbReference>
<dbReference type="InterPro" id="IPR000238">
    <property type="entry name" value="RbfA"/>
</dbReference>
<dbReference type="InterPro" id="IPR023799">
    <property type="entry name" value="RbfA_dom_sf"/>
</dbReference>
<dbReference type="InterPro" id="IPR020053">
    <property type="entry name" value="Ribosome-bd_factorA_CS"/>
</dbReference>
<dbReference type="NCBIfam" id="TIGR00082">
    <property type="entry name" value="rbfA"/>
    <property type="match status" value="1"/>
</dbReference>
<dbReference type="PANTHER" id="PTHR33515">
    <property type="entry name" value="RIBOSOME-BINDING FACTOR A, CHLOROPLASTIC-RELATED"/>
    <property type="match status" value="1"/>
</dbReference>
<dbReference type="PANTHER" id="PTHR33515:SF1">
    <property type="entry name" value="RIBOSOME-BINDING FACTOR A, CHLOROPLASTIC-RELATED"/>
    <property type="match status" value="1"/>
</dbReference>
<dbReference type="Pfam" id="PF02033">
    <property type="entry name" value="RBFA"/>
    <property type="match status" value="1"/>
</dbReference>
<dbReference type="SUPFAM" id="SSF89919">
    <property type="entry name" value="Ribosome-binding factor A, RbfA"/>
    <property type="match status" value="1"/>
</dbReference>
<dbReference type="PROSITE" id="PS01319">
    <property type="entry name" value="RBFA"/>
    <property type="match status" value="1"/>
</dbReference>
<comment type="function">
    <text evidence="1">One of several proteins that assist in the late maturation steps of the functional core of the 30S ribosomal subunit. Associates with free 30S ribosomal subunits (but not with 30S subunits that are part of 70S ribosomes or polysomes). Required for efficient processing of 16S rRNA. May interact with the 5'-terminal helix region of 16S rRNA.</text>
</comment>
<comment type="subunit">
    <text evidence="1">Monomer. Binds 30S ribosomal subunits, but not 50S ribosomal subunits or 70S ribosomes.</text>
</comment>
<comment type="subcellular location">
    <subcellularLocation>
        <location evidence="1">Cytoplasm</location>
    </subcellularLocation>
</comment>
<comment type="similarity">
    <text evidence="1">Belongs to the RbfA family.</text>
</comment>
<sequence length="125" mass="14084">MVKEFSRSDRVAEQIQRELADLLQFEVKDPRVSSMVTVTEVEVSGDMSHAKVYYTAPQGTPELQKGLEKTAGFLRSQLARRLLLRTVPQLHFVYDASIDRGMRIAKLIDEALPPVADPDQDSEPN</sequence>